<dbReference type="EMBL" id="AY513748">
    <property type="protein sequence ID" value="AAS00645.1"/>
    <property type="molecule type" value="mRNA"/>
</dbReference>
<dbReference type="GO" id="GO:0016460">
    <property type="term" value="C:myosin II complex"/>
    <property type="evidence" value="ECO:0007669"/>
    <property type="project" value="TreeGrafter"/>
</dbReference>
<dbReference type="GO" id="GO:0005509">
    <property type="term" value="F:calcium ion binding"/>
    <property type="evidence" value="ECO:0007669"/>
    <property type="project" value="InterPro"/>
</dbReference>
<dbReference type="CDD" id="cd00051">
    <property type="entry name" value="EFh"/>
    <property type="match status" value="2"/>
</dbReference>
<dbReference type="FunFam" id="1.10.238.10:FF:000527">
    <property type="entry name" value="Calmodulin-3"/>
    <property type="match status" value="1"/>
</dbReference>
<dbReference type="Gene3D" id="1.10.238.10">
    <property type="entry name" value="EF-hand"/>
    <property type="match status" value="3"/>
</dbReference>
<dbReference type="InterPro" id="IPR050230">
    <property type="entry name" value="CALM/Myosin/TropC-like"/>
</dbReference>
<dbReference type="InterPro" id="IPR011992">
    <property type="entry name" value="EF-hand-dom_pair"/>
</dbReference>
<dbReference type="InterPro" id="IPR018247">
    <property type="entry name" value="EF_Hand_1_Ca_BS"/>
</dbReference>
<dbReference type="InterPro" id="IPR002048">
    <property type="entry name" value="EF_hand_dom"/>
</dbReference>
<dbReference type="PANTHER" id="PTHR23048:SF0">
    <property type="entry name" value="CALMODULIN LIKE 3"/>
    <property type="match status" value="1"/>
</dbReference>
<dbReference type="PANTHER" id="PTHR23048">
    <property type="entry name" value="MYOSIN LIGHT CHAIN 1, 3"/>
    <property type="match status" value="1"/>
</dbReference>
<dbReference type="Pfam" id="PF13499">
    <property type="entry name" value="EF-hand_7"/>
    <property type="match status" value="2"/>
</dbReference>
<dbReference type="SMART" id="SM00054">
    <property type="entry name" value="EFh"/>
    <property type="match status" value="4"/>
</dbReference>
<dbReference type="SUPFAM" id="SSF47473">
    <property type="entry name" value="EF-hand"/>
    <property type="match status" value="1"/>
</dbReference>
<dbReference type="PROSITE" id="PS00018">
    <property type="entry name" value="EF_HAND_1"/>
    <property type="match status" value="4"/>
</dbReference>
<dbReference type="PROSITE" id="PS50222">
    <property type="entry name" value="EF_HAND_2"/>
    <property type="match status" value="4"/>
</dbReference>
<evidence type="ECO:0000250" key="1"/>
<evidence type="ECO:0000250" key="2">
    <source>
        <dbReference type="UniProtKB" id="P0DP23"/>
    </source>
</evidence>
<evidence type="ECO:0000255" key="3">
    <source>
        <dbReference type="PROSITE-ProRule" id="PRU00448"/>
    </source>
</evidence>
<evidence type="ECO:0000305" key="4"/>
<name>CALM_OREMO</name>
<feature type="initiator methionine" description="Removed" evidence="2">
    <location>
        <position position="1"/>
    </location>
</feature>
<feature type="chain" id="PRO_0000198238" description="Calmodulin">
    <location>
        <begin position="2"/>
        <end position="149"/>
    </location>
</feature>
<feature type="domain" description="EF-hand 1" evidence="3">
    <location>
        <begin position="8"/>
        <end position="43"/>
    </location>
</feature>
<feature type="domain" description="EF-hand 2" evidence="3">
    <location>
        <begin position="44"/>
        <end position="79"/>
    </location>
</feature>
<feature type="domain" description="EF-hand 3" evidence="3">
    <location>
        <begin position="81"/>
        <end position="116"/>
    </location>
</feature>
<feature type="domain" description="EF-hand 4" evidence="3">
    <location>
        <begin position="117"/>
        <end position="149"/>
    </location>
</feature>
<feature type="binding site" evidence="3">
    <location>
        <position position="21"/>
    </location>
    <ligand>
        <name>Ca(2+)</name>
        <dbReference type="ChEBI" id="CHEBI:29108"/>
        <label>1</label>
    </ligand>
</feature>
<feature type="binding site" evidence="3">
    <location>
        <position position="23"/>
    </location>
    <ligand>
        <name>Ca(2+)</name>
        <dbReference type="ChEBI" id="CHEBI:29108"/>
        <label>1</label>
    </ligand>
</feature>
<feature type="binding site" evidence="3">
    <location>
        <position position="25"/>
    </location>
    <ligand>
        <name>Ca(2+)</name>
        <dbReference type="ChEBI" id="CHEBI:29108"/>
        <label>1</label>
    </ligand>
</feature>
<feature type="binding site" evidence="3">
    <location>
        <position position="27"/>
    </location>
    <ligand>
        <name>Ca(2+)</name>
        <dbReference type="ChEBI" id="CHEBI:29108"/>
        <label>1</label>
    </ligand>
</feature>
<feature type="binding site" evidence="3">
    <location>
        <position position="32"/>
    </location>
    <ligand>
        <name>Ca(2+)</name>
        <dbReference type="ChEBI" id="CHEBI:29108"/>
        <label>1</label>
    </ligand>
</feature>
<feature type="binding site" evidence="3">
    <location>
        <position position="57"/>
    </location>
    <ligand>
        <name>Ca(2+)</name>
        <dbReference type="ChEBI" id="CHEBI:29108"/>
        <label>2</label>
    </ligand>
</feature>
<feature type="binding site" evidence="3">
    <location>
        <position position="59"/>
    </location>
    <ligand>
        <name>Ca(2+)</name>
        <dbReference type="ChEBI" id="CHEBI:29108"/>
        <label>2</label>
    </ligand>
</feature>
<feature type="binding site" evidence="3">
    <location>
        <position position="61"/>
    </location>
    <ligand>
        <name>Ca(2+)</name>
        <dbReference type="ChEBI" id="CHEBI:29108"/>
        <label>2</label>
    </ligand>
</feature>
<feature type="binding site" evidence="3">
    <location>
        <position position="63"/>
    </location>
    <ligand>
        <name>Ca(2+)</name>
        <dbReference type="ChEBI" id="CHEBI:29108"/>
        <label>2</label>
    </ligand>
</feature>
<feature type="binding site" evidence="3">
    <location>
        <position position="68"/>
    </location>
    <ligand>
        <name>Ca(2+)</name>
        <dbReference type="ChEBI" id="CHEBI:29108"/>
        <label>2</label>
    </ligand>
</feature>
<feature type="binding site" evidence="3">
    <location>
        <position position="94"/>
    </location>
    <ligand>
        <name>Ca(2+)</name>
        <dbReference type="ChEBI" id="CHEBI:29108"/>
        <label>3</label>
    </ligand>
</feature>
<feature type="binding site" evidence="3">
    <location>
        <position position="96"/>
    </location>
    <ligand>
        <name>Ca(2+)</name>
        <dbReference type="ChEBI" id="CHEBI:29108"/>
        <label>3</label>
    </ligand>
</feature>
<feature type="binding site" evidence="3">
    <location>
        <position position="98"/>
    </location>
    <ligand>
        <name>Ca(2+)</name>
        <dbReference type="ChEBI" id="CHEBI:29108"/>
        <label>3</label>
    </ligand>
</feature>
<feature type="binding site" evidence="3">
    <location>
        <position position="100"/>
    </location>
    <ligand>
        <name>Ca(2+)</name>
        <dbReference type="ChEBI" id="CHEBI:29108"/>
        <label>3</label>
    </ligand>
</feature>
<feature type="binding site" evidence="3">
    <location>
        <position position="105"/>
    </location>
    <ligand>
        <name>Ca(2+)</name>
        <dbReference type="ChEBI" id="CHEBI:29108"/>
        <label>3</label>
    </ligand>
</feature>
<feature type="binding site" evidence="3">
    <location>
        <position position="130"/>
    </location>
    <ligand>
        <name>Ca(2+)</name>
        <dbReference type="ChEBI" id="CHEBI:29108"/>
        <label>4</label>
    </ligand>
</feature>
<feature type="binding site" evidence="3">
    <location>
        <position position="132"/>
    </location>
    <ligand>
        <name>Ca(2+)</name>
        <dbReference type="ChEBI" id="CHEBI:29108"/>
        <label>4</label>
    </ligand>
</feature>
<feature type="binding site" evidence="3">
    <location>
        <position position="134"/>
    </location>
    <ligand>
        <name>Ca(2+)</name>
        <dbReference type="ChEBI" id="CHEBI:29108"/>
        <label>4</label>
    </ligand>
</feature>
<feature type="binding site" evidence="3">
    <location>
        <position position="136"/>
    </location>
    <ligand>
        <name>Ca(2+)</name>
        <dbReference type="ChEBI" id="CHEBI:29108"/>
        <label>4</label>
    </ligand>
</feature>
<feature type="binding site" evidence="3">
    <location>
        <position position="141"/>
    </location>
    <ligand>
        <name>Ca(2+)</name>
        <dbReference type="ChEBI" id="CHEBI:29108"/>
        <label>4</label>
    </ligand>
</feature>
<feature type="modified residue" description="N-acetylalanine" evidence="2">
    <location>
        <position position="2"/>
    </location>
</feature>
<feature type="modified residue" description="N6,N6,N6-trimethyllysine" evidence="2">
    <location>
        <position position="116"/>
    </location>
</feature>
<gene>
    <name type="primary">calm</name>
</gene>
<keyword id="KW-0007">Acetylation</keyword>
<keyword id="KW-0106">Calcium</keyword>
<keyword id="KW-0479">Metal-binding</keyword>
<keyword id="KW-0488">Methylation</keyword>
<keyword id="KW-0677">Repeat</keyword>
<organism>
    <name type="scientific">Oreochromis mossambicus</name>
    <name type="common">Mozambique tilapia</name>
    <name type="synonym">Tilapia mossambica</name>
    <dbReference type="NCBI Taxonomy" id="8127"/>
    <lineage>
        <taxon>Eukaryota</taxon>
        <taxon>Metazoa</taxon>
        <taxon>Chordata</taxon>
        <taxon>Craniata</taxon>
        <taxon>Vertebrata</taxon>
        <taxon>Euteleostomi</taxon>
        <taxon>Actinopterygii</taxon>
        <taxon>Neopterygii</taxon>
        <taxon>Teleostei</taxon>
        <taxon>Neoteleostei</taxon>
        <taxon>Acanthomorphata</taxon>
        <taxon>Ovalentaria</taxon>
        <taxon>Cichlomorphae</taxon>
        <taxon>Cichliformes</taxon>
        <taxon>Cichlidae</taxon>
        <taxon>African cichlids</taxon>
        <taxon>Pseudocrenilabrinae</taxon>
        <taxon>Oreochromini</taxon>
        <taxon>Oreochromis</taxon>
    </lineage>
</organism>
<protein>
    <recommendedName>
        <fullName>Calmodulin</fullName>
        <shortName>CaM</shortName>
    </recommendedName>
</protein>
<reference key="1">
    <citation type="submission" date="2003-12" db="EMBL/GenBank/DDBJ databases">
        <title>cDNA library of tilapia brain during transient salinity change.</title>
        <authorList>
            <person name="Lo C.-W."/>
            <person name="Lo M.-J."/>
            <person name="Weng C.-F."/>
        </authorList>
    </citation>
    <scope>NUCLEOTIDE SEQUENCE [MRNA]</scope>
    <source>
        <tissue>Brain</tissue>
    </source>
</reference>
<comment type="function">
    <text evidence="2">Calmodulin acts as part of a calcium signal transduction pathway by mediating the control of a large number of enzymes, ion channels, aquaporins and other proteins through calcium-binding. Calcium-binding is required for the activation of calmodulin. Among the enzymes to be stimulated by the calmodulin-calcium complex are a number of protein kinases, such as myosin light-chain kinases and calmodulin-dependent protein kinase type II (CaMK2), and phosphatases.</text>
</comment>
<comment type="miscellaneous">
    <text evidence="1">This protein has four functional calcium-binding sites.</text>
</comment>
<comment type="similarity">
    <text evidence="4">Belongs to the calmodulin family.</text>
</comment>
<proteinExistence type="evidence at transcript level"/>
<sequence length="149" mass="16846">MADQLTEEQIAEFKEAFSLFDKDGDGTITTKELGTVMRSLGQNPTEAELQDMINEVDADGNGTIDFPEFLTMMARKMKDTDSEEEIREAFRVFDKDGNGYISAAELRYVMTNLGEKLTDEXVDEMIREADIDGDGQVNYEEFVQMMTAK</sequence>
<accession>Q6R520</accession>